<organism>
    <name type="scientific">Sarcophaga bullata</name>
    <name type="common">Grey flesh fly</name>
    <name type="synonym">Neobellieria bullata</name>
    <dbReference type="NCBI Taxonomy" id="7385"/>
    <lineage>
        <taxon>Eukaryota</taxon>
        <taxon>Metazoa</taxon>
        <taxon>Ecdysozoa</taxon>
        <taxon>Arthropoda</taxon>
        <taxon>Hexapoda</taxon>
        <taxon>Insecta</taxon>
        <taxon>Pterygota</taxon>
        <taxon>Neoptera</taxon>
        <taxon>Endopterygota</taxon>
        <taxon>Diptera</taxon>
        <taxon>Brachycera</taxon>
        <taxon>Muscomorpha</taxon>
        <taxon>Oestroidea</taxon>
        <taxon>Sarcophagidae</taxon>
        <taxon>Sarcophaga</taxon>
        <taxon>Neobellieria</taxon>
    </lineage>
</organism>
<reference evidence="4" key="1">
    <citation type="journal article" date="2009" name="Gen. Comp. Endocrinol.">
        <title>Extended FMRFamides in dipteran insects: conservative expression in the neuroendocrine system is accompanied by rapid sequence evolution.</title>
        <authorList>
            <person name="Rahman M.M."/>
            <person name="Fromm B."/>
            <person name="Neupert S."/>
            <person name="Kreusch S."/>
            <person name="Predel R."/>
        </authorList>
    </citation>
    <scope>PROTEIN SEQUENCE</scope>
    <scope>MASS SPECTROMETRY</scope>
    <scope>AMIDATION AT PHE-10</scope>
    <source>
        <tissue evidence="2">Thoracic ganglionic sheath</tissue>
    </source>
</reference>
<sequence length="10" mass="1211">SPPSQDFMRF</sequence>
<comment type="subcellular location">
    <subcellularLocation>
        <location evidence="4">Secreted</location>
    </subcellularLocation>
</comment>
<comment type="mass spectrometry" mass="1210.56" method="MALDI" evidence="2"/>
<comment type="similarity">
    <text evidence="1">Belongs to the FARP (FMRFamide related peptide) family.</text>
</comment>
<name>FAR3_SARBU</name>
<protein>
    <recommendedName>
        <fullName>FMRFamide-3</fullName>
    </recommendedName>
    <alternativeName>
        <fullName evidence="3">SabFMRFamide-3</fullName>
    </alternativeName>
</protein>
<keyword id="KW-0027">Amidation</keyword>
<keyword id="KW-0903">Direct protein sequencing</keyword>
<keyword id="KW-0527">Neuropeptide</keyword>
<keyword id="KW-0964">Secreted</keyword>
<dbReference type="GO" id="GO:0005576">
    <property type="term" value="C:extracellular region"/>
    <property type="evidence" value="ECO:0007669"/>
    <property type="project" value="UniProtKB-SubCell"/>
</dbReference>
<dbReference type="GO" id="GO:0007218">
    <property type="term" value="P:neuropeptide signaling pathway"/>
    <property type="evidence" value="ECO:0007669"/>
    <property type="project" value="UniProtKB-KW"/>
</dbReference>
<proteinExistence type="evidence at protein level"/>
<evidence type="ECO:0000255" key="1"/>
<evidence type="ECO:0000269" key="2">
    <source>
    </source>
</evidence>
<evidence type="ECO:0000303" key="3">
    <source>
    </source>
</evidence>
<evidence type="ECO:0000305" key="4"/>
<feature type="peptide" id="PRO_0000371762" description="FMRFamide-3">
    <location>
        <begin position="1"/>
        <end position="10"/>
    </location>
</feature>
<feature type="modified residue" description="Phenylalanine amide" evidence="2">
    <location>
        <position position="10"/>
    </location>
</feature>
<accession>P85476</accession>